<comment type="function">
    <text evidence="9 10 11 14">Polyketide synthase; part of the gene cluster that mediates the biosynthesis of bikaverin, a red pigment also considered as a mycotoxin (PubMed:12409099, PubMed:17696354, PubMed:19400779). The first stage is catalyzed by the polyketide synthase bik1, which catalyzes the formation of the intermediate SMA76a also knowm as pre-bikaverin (PubMed:12409099, PubMed:17696354, PubMed:19400779). FAD-dependent monooxygenase bik2 might then be responsible for the oxidation of pre-bikaverin to oxo-pre-bikaverin which is in turn methylated by the O-methyltransferase bik3 to me-oxo-pre-bikaverin (PubMed:26382642). A further cycle of oxydation and methylation by bik2 and bik3 leads to the final product of bikaverin, via a nor-bikaverin intermediate (PubMed:19400779, PubMed:26382642).</text>
</comment>
<comment type="pathway">
    <text evidence="9 10 11 14">Secondary metabolite biosynthesis.</text>
</comment>
<comment type="induction">
    <text evidence="9 11 12 13">Expression is repressed during the growth phase, but is induced as the growth rate decreases due to nitrogen depletion of the culture medium (PubMed:12409099). Highly expressed only under acidic culture conditions (PubMed:12409099, PubMed:19400779). Also induced by salt starvation (PubMed:19838698). Expression is repressed by regulatory gene, areA, a transcriptional regulator responsible for the activation of nitrogen assimilation genes (PubMed:12409099). Expression is also negatively regulated by vel1 (PubMed:20572938).</text>
</comment>
<comment type="domain">
    <text evidence="2">Multidomain protein; including a starter unit:ACP transacylase (SAT) that selects the starter unit; a ketosynthase (KS) that catalyzes repeated decarboxylative condensation to elongate the polyketide back- bone; a malonyl-CoA:ACP transacylase (MAT) that selects and transfers the extender unit malonyl-CoA; a product template (PT) domain that controls the immediate cyclization regioselectivity of the reactive polyketide backbone; and an acyl-carrier protein (ACP) that serves as the tether of the growing and completed polyketide via its phosphopantetheinyl arm (By similarity).</text>
</comment>
<comment type="disruption phenotype">
    <text evidence="9 11 14">Impairs the production of bikaverin and its intermediate oxo-pre-bikaverin (PubMed:12409099, PubMed:19400779, PubMed:26382642).</text>
</comment>
<keyword id="KW-0012">Acyltransferase</keyword>
<keyword id="KW-0596">Phosphopantetheine</keyword>
<keyword id="KW-0597">Phosphoprotein</keyword>
<keyword id="KW-1185">Reference proteome</keyword>
<keyword id="KW-0808">Transferase</keyword>
<reference key="1">
    <citation type="journal article" date="2013" name="PLoS Pathog.">
        <title>Deciphering the cryptic genome: genome-wide analyses of the rice pathogen Fusarium fujikuroi reveal complex regulation of secondary metabolism and novel metabolites.</title>
        <authorList>
            <person name="Wiemann P."/>
            <person name="Sieber C.M.K."/>
            <person name="von Bargen K.W."/>
            <person name="Studt L."/>
            <person name="Niehaus E.-M."/>
            <person name="Espino J.J."/>
            <person name="Huss K."/>
            <person name="Michielse C.B."/>
            <person name="Albermann S."/>
            <person name="Wagner D."/>
            <person name="Bergner S.V."/>
            <person name="Connolly L.R."/>
            <person name="Fischer A."/>
            <person name="Reuter G."/>
            <person name="Kleigrewe K."/>
            <person name="Bald T."/>
            <person name="Wingfield B.D."/>
            <person name="Ophir R."/>
            <person name="Freeman S."/>
            <person name="Hippler M."/>
            <person name="Smith K.M."/>
            <person name="Brown D.W."/>
            <person name="Proctor R.H."/>
            <person name="Muensterkoetter M."/>
            <person name="Freitag M."/>
            <person name="Humpf H.-U."/>
            <person name="Gueldener U."/>
            <person name="Tudzynski B."/>
        </authorList>
    </citation>
    <scope>NUCLEOTIDE SEQUENCE [LARGE SCALE GENOMIC DNA]</scope>
    <source>
        <strain>CBS 195.34 / IMI 58289 / NRRL A-6831</strain>
    </source>
</reference>
<reference key="2">
    <citation type="journal article" date="2002" name="Fungal Genet. Biol.">
        <title>The polyketide synthase gene pks4 from Gibberella fujikuroi encodes a key enzyme in the biosynthesis of the red pigment bikaverin.</title>
        <authorList>
            <person name="Linnemannstoens P."/>
            <person name="Schulte J."/>
            <person name="del Mar Prado M."/>
            <person name="Proctor R.H."/>
            <person name="Avalos J."/>
            <person name="Tudzynski B."/>
        </authorList>
    </citation>
    <scope>FUNCTION</scope>
    <scope>DISRUPTION PHENOTYPE</scope>
    <scope>INDUCTION</scope>
</reference>
<reference key="3">
    <citation type="journal article" date="2007" name="J. Am. Chem. Soc.">
        <title>Enzymatic synthesis of aromatic polyketides using PKS4 from Gibberella fujikuroi.</title>
        <authorList>
            <person name="Ma S.M."/>
            <person name="Zhan J."/>
            <person name="Watanabe K."/>
            <person name="Xie X."/>
            <person name="Zhang W."/>
            <person name="Wang C.C."/>
            <person name="Tang Y."/>
        </authorList>
    </citation>
    <scope>FUNCTION</scope>
    <scope>CATALYTIC ACTIVITY</scope>
</reference>
<reference key="4">
    <citation type="journal article" date="2009" name="Mol. Microbiol.">
        <title>Biosynthesis of the red pigment bikaverin in Fusarium fujikuroi: genes, their function and regulation.</title>
        <authorList>
            <person name="Wiemann P."/>
            <person name="Willmann A."/>
            <person name="Straeten M."/>
            <person name="Kleigrewe K."/>
            <person name="Beyer M."/>
            <person name="Humpf H.U."/>
            <person name="Tudzynski B."/>
        </authorList>
    </citation>
    <scope>FUNCTION</scope>
    <scope>INDUCTION</scope>
    <scope>DISRUPTION PHENOTYPE</scope>
    <scope>CATALYTIC ACTIVITY</scope>
</reference>
<reference key="5">
    <citation type="journal article" date="2010" name="Appl. Microbiol. Biotechnol.">
        <title>Stimulation of bikaverin production by sucrose and by salt starvation in Fusarium fujikuroi.</title>
        <authorList>
            <person name="Rodriguez-Ortiz R."/>
            <person name="Mehta B.J."/>
            <person name="Avalos J."/>
            <person name="Limon M.C."/>
        </authorList>
    </citation>
    <scope>INDUCTION</scope>
</reference>
<reference key="6">
    <citation type="journal article" date="2010" name="Mol. Microbiol.">
        <title>FfVel1 and FfLae1, components of a velvet-like complex in Fusarium fujikuroi, affect differentiation, secondary metabolism and virulence.</title>
        <authorList>
            <person name="Wiemann P."/>
            <person name="Brown D.W."/>
            <person name="Kleigrewe K."/>
            <person name="Bok J.W."/>
            <person name="Keller N.P."/>
            <person name="Humpf H.U."/>
            <person name="Tudzynski B."/>
        </authorList>
    </citation>
    <scope>INDUCTION</scope>
</reference>
<reference key="7">
    <citation type="journal article" date="2015" name="Fungal Genet. Biol.">
        <title>Genetic engineering, high resolution mass spectrometry and nuclear magnetic resonance spectroscopy elucidate the bikaverin biosynthetic pathway in Fusarium fujikuroi.</title>
        <authorList>
            <person name="Arndt B."/>
            <person name="Studt L."/>
            <person name="Wiemann P."/>
            <person name="Osmanov H."/>
            <person name="Kleigrewe K."/>
            <person name="Koehler J."/>
            <person name="Krug I."/>
            <person name="Tudzynski B."/>
            <person name="Humpf H.U."/>
        </authorList>
    </citation>
    <scope>FUNCTION</scope>
    <scope>DISRUPTION PHENOTYPE</scope>
</reference>
<organism>
    <name type="scientific">Gibberella fujikuroi (strain CBS 195.34 / IMI 58289 / NRRL A-6831)</name>
    <name type="common">Bakanae and foot rot disease fungus</name>
    <name type="synonym">Fusarium fujikuroi</name>
    <dbReference type="NCBI Taxonomy" id="1279085"/>
    <lineage>
        <taxon>Eukaryota</taxon>
        <taxon>Fungi</taxon>
        <taxon>Dikarya</taxon>
        <taxon>Ascomycota</taxon>
        <taxon>Pezizomycotina</taxon>
        <taxon>Sordariomycetes</taxon>
        <taxon>Hypocreomycetidae</taxon>
        <taxon>Hypocreales</taxon>
        <taxon>Nectriaceae</taxon>
        <taxon>Fusarium</taxon>
        <taxon>Fusarium fujikuroi species complex</taxon>
    </lineage>
</organism>
<accession>S0DZM7</accession>
<name>BIK1_GIBF5</name>
<dbReference type="EC" id="2.3.1.-" evidence="10 11"/>
<dbReference type="EMBL" id="HF679027">
    <property type="protein sequence ID" value="CCT67991.1"/>
    <property type="molecule type" value="Genomic_DNA"/>
</dbReference>
<dbReference type="SMR" id="S0DZM7"/>
<dbReference type="STRING" id="1279085.S0DZM7"/>
<dbReference type="ESTHER" id="gibf5-bik1">
    <property type="family name" value="Thioesterase"/>
</dbReference>
<dbReference type="EnsemblFungi" id="CCT67991">
    <property type="protein sequence ID" value="CCT67991"/>
    <property type="gene ID" value="FFUJ_06742"/>
</dbReference>
<dbReference type="VEuPathDB" id="FungiDB:FFUJ_06742"/>
<dbReference type="HOGENOM" id="CLU_000022_6_0_1"/>
<dbReference type="Proteomes" id="UP000016800">
    <property type="component" value="Chromosome 5"/>
</dbReference>
<dbReference type="GO" id="GO:0004315">
    <property type="term" value="F:3-oxoacyl-[acyl-carrier-protein] synthase activity"/>
    <property type="evidence" value="ECO:0007669"/>
    <property type="project" value="InterPro"/>
</dbReference>
<dbReference type="GO" id="GO:0004312">
    <property type="term" value="F:fatty acid synthase activity"/>
    <property type="evidence" value="ECO:0007669"/>
    <property type="project" value="TreeGrafter"/>
</dbReference>
<dbReference type="GO" id="GO:0031177">
    <property type="term" value="F:phosphopantetheine binding"/>
    <property type="evidence" value="ECO:0007669"/>
    <property type="project" value="InterPro"/>
</dbReference>
<dbReference type="GO" id="GO:0006633">
    <property type="term" value="P:fatty acid biosynthetic process"/>
    <property type="evidence" value="ECO:0007669"/>
    <property type="project" value="InterPro"/>
</dbReference>
<dbReference type="GO" id="GO:0046189">
    <property type="term" value="P:phenol-containing compound biosynthetic process"/>
    <property type="evidence" value="ECO:0007669"/>
    <property type="project" value="UniProtKB-ARBA"/>
</dbReference>
<dbReference type="GO" id="GO:0030639">
    <property type="term" value="P:polyketide biosynthetic process"/>
    <property type="evidence" value="ECO:0007669"/>
    <property type="project" value="UniProtKB-ARBA"/>
</dbReference>
<dbReference type="GO" id="GO:0009403">
    <property type="term" value="P:toxin biosynthetic process"/>
    <property type="evidence" value="ECO:0007669"/>
    <property type="project" value="UniProtKB-ARBA"/>
</dbReference>
<dbReference type="CDD" id="cd00833">
    <property type="entry name" value="PKS"/>
    <property type="match status" value="1"/>
</dbReference>
<dbReference type="FunFam" id="1.10.1200.10:FF:000011">
    <property type="entry name" value="Sterigmatocystin biosynthesis polyketide synthase"/>
    <property type="match status" value="1"/>
</dbReference>
<dbReference type="FunFam" id="3.10.129.110:FF:000001">
    <property type="entry name" value="Sterigmatocystin biosynthesis polyketide synthase"/>
    <property type="match status" value="1"/>
</dbReference>
<dbReference type="FunFam" id="3.40.47.10:FF:000031">
    <property type="entry name" value="Sterigmatocystin biosynthesis polyketide synthase"/>
    <property type="match status" value="1"/>
</dbReference>
<dbReference type="FunFam" id="3.40.50.1820:FF:000116">
    <property type="entry name" value="Sterigmatocystin biosynthesis polyketide synthase"/>
    <property type="match status" value="1"/>
</dbReference>
<dbReference type="Gene3D" id="3.30.70.3290">
    <property type="match status" value="1"/>
</dbReference>
<dbReference type="Gene3D" id="3.40.47.10">
    <property type="match status" value="1"/>
</dbReference>
<dbReference type="Gene3D" id="1.10.1200.10">
    <property type="entry name" value="ACP-like"/>
    <property type="match status" value="1"/>
</dbReference>
<dbReference type="Gene3D" id="3.40.50.1820">
    <property type="entry name" value="alpha/beta hydrolase"/>
    <property type="match status" value="1"/>
</dbReference>
<dbReference type="Gene3D" id="3.40.366.10">
    <property type="entry name" value="Malonyl-Coenzyme A Acyl Carrier Protein, domain 2"/>
    <property type="match status" value="2"/>
</dbReference>
<dbReference type="Gene3D" id="3.10.129.110">
    <property type="entry name" value="Polyketide synthase dehydratase"/>
    <property type="match status" value="1"/>
</dbReference>
<dbReference type="InterPro" id="IPR029058">
    <property type="entry name" value="AB_hydrolase_fold"/>
</dbReference>
<dbReference type="InterPro" id="IPR001227">
    <property type="entry name" value="Ac_transferase_dom_sf"/>
</dbReference>
<dbReference type="InterPro" id="IPR036736">
    <property type="entry name" value="ACP-like_sf"/>
</dbReference>
<dbReference type="InterPro" id="IPR014043">
    <property type="entry name" value="Acyl_transferase_dom"/>
</dbReference>
<dbReference type="InterPro" id="IPR016035">
    <property type="entry name" value="Acyl_Trfase/lysoPLipase"/>
</dbReference>
<dbReference type="InterPro" id="IPR018201">
    <property type="entry name" value="Ketoacyl_synth_AS"/>
</dbReference>
<dbReference type="InterPro" id="IPR014031">
    <property type="entry name" value="Ketoacyl_synth_C"/>
</dbReference>
<dbReference type="InterPro" id="IPR014030">
    <property type="entry name" value="Ketoacyl_synth_N"/>
</dbReference>
<dbReference type="InterPro" id="IPR016036">
    <property type="entry name" value="Malonyl_transacylase_ACP-bd"/>
</dbReference>
<dbReference type="InterPro" id="IPR020841">
    <property type="entry name" value="PKS_Beta-ketoAc_synthase_dom"/>
</dbReference>
<dbReference type="InterPro" id="IPR042104">
    <property type="entry name" value="PKS_dehydratase_sf"/>
</dbReference>
<dbReference type="InterPro" id="IPR049551">
    <property type="entry name" value="PKS_DH_C"/>
</dbReference>
<dbReference type="InterPro" id="IPR049900">
    <property type="entry name" value="PKS_mFAS_DH"/>
</dbReference>
<dbReference type="InterPro" id="IPR050091">
    <property type="entry name" value="PKS_NRPS_Biosynth_Enz"/>
</dbReference>
<dbReference type="InterPro" id="IPR020806">
    <property type="entry name" value="PKS_PP-bd"/>
</dbReference>
<dbReference type="InterPro" id="IPR009081">
    <property type="entry name" value="PP-bd_ACP"/>
</dbReference>
<dbReference type="InterPro" id="IPR006162">
    <property type="entry name" value="Ppantetheine_attach_site"/>
</dbReference>
<dbReference type="InterPro" id="IPR030918">
    <property type="entry name" value="PT_fungal_PKS"/>
</dbReference>
<dbReference type="InterPro" id="IPR032088">
    <property type="entry name" value="SAT"/>
</dbReference>
<dbReference type="InterPro" id="IPR001031">
    <property type="entry name" value="Thioesterase"/>
</dbReference>
<dbReference type="InterPro" id="IPR016039">
    <property type="entry name" value="Thiolase-like"/>
</dbReference>
<dbReference type="NCBIfam" id="TIGR04532">
    <property type="entry name" value="PT_fungal_PKS"/>
    <property type="match status" value="1"/>
</dbReference>
<dbReference type="PANTHER" id="PTHR43775:SF45">
    <property type="entry name" value="CONIDIAL PIGMENT POLYKETIDE SYNTHASE ALB1"/>
    <property type="match status" value="1"/>
</dbReference>
<dbReference type="PANTHER" id="PTHR43775">
    <property type="entry name" value="FATTY ACID SYNTHASE"/>
    <property type="match status" value="1"/>
</dbReference>
<dbReference type="Pfam" id="PF00698">
    <property type="entry name" value="Acyl_transf_1"/>
    <property type="match status" value="1"/>
</dbReference>
<dbReference type="Pfam" id="PF22621">
    <property type="entry name" value="CurL-like_PKS_C"/>
    <property type="match status" value="1"/>
</dbReference>
<dbReference type="Pfam" id="PF00109">
    <property type="entry name" value="ketoacyl-synt"/>
    <property type="match status" value="1"/>
</dbReference>
<dbReference type="Pfam" id="PF02801">
    <property type="entry name" value="Ketoacyl-synt_C"/>
    <property type="match status" value="1"/>
</dbReference>
<dbReference type="Pfam" id="PF00550">
    <property type="entry name" value="PP-binding"/>
    <property type="match status" value="1"/>
</dbReference>
<dbReference type="Pfam" id="PF14765">
    <property type="entry name" value="PS-DH"/>
    <property type="match status" value="1"/>
</dbReference>
<dbReference type="Pfam" id="PF16073">
    <property type="entry name" value="SAT"/>
    <property type="match status" value="1"/>
</dbReference>
<dbReference type="Pfam" id="PF00975">
    <property type="entry name" value="Thioesterase"/>
    <property type="match status" value="1"/>
</dbReference>
<dbReference type="SMART" id="SM00827">
    <property type="entry name" value="PKS_AT"/>
    <property type="match status" value="1"/>
</dbReference>
<dbReference type="SMART" id="SM00825">
    <property type="entry name" value="PKS_KS"/>
    <property type="match status" value="1"/>
</dbReference>
<dbReference type="SMART" id="SM00823">
    <property type="entry name" value="PKS_PP"/>
    <property type="match status" value="1"/>
</dbReference>
<dbReference type="SUPFAM" id="SSF47336">
    <property type="entry name" value="ACP-like"/>
    <property type="match status" value="1"/>
</dbReference>
<dbReference type="SUPFAM" id="SSF53474">
    <property type="entry name" value="alpha/beta-Hydrolases"/>
    <property type="match status" value="1"/>
</dbReference>
<dbReference type="SUPFAM" id="SSF52151">
    <property type="entry name" value="FabD/lysophospholipase-like"/>
    <property type="match status" value="1"/>
</dbReference>
<dbReference type="SUPFAM" id="SSF55048">
    <property type="entry name" value="Probable ACP-binding domain of malonyl-CoA ACP transacylase"/>
    <property type="match status" value="1"/>
</dbReference>
<dbReference type="SUPFAM" id="SSF53901">
    <property type="entry name" value="Thiolase-like"/>
    <property type="match status" value="1"/>
</dbReference>
<dbReference type="PROSITE" id="PS50075">
    <property type="entry name" value="CARRIER"/>
    <property type="match status" value="1"/>
</dbReference>
<dbReference type="PROSITE" id="PS00606">
    <property type="entry name" value="KS3_1"/>
    <property type="match status" value="1"/>
</dbReference>
<dbReference type="PROSITE" id="PS52004">
    <property type="entry name" value="KS3_2"/>
    <property type="match status" value="1"/>
</dbReference>
<dbReference type="PROSITE" id="PS00012">
    <property type="entry name" value="PHOSPHOPANTETHEINE"/>
    <property type="match status" value="1"/>
</dbReference>
<dbReference type="PROSITE" id="PS52019">
    <property type="entry name" value="PKS_MFAS_DH"/>
    <property type="match status" value="1"/>
</dbReference>
<proteinExistence type="evidence at protein level"/>
<sequence length="2036" mass="221460">MASSADVYVFGDQSTPVLDKLQALVRVKDNALLTSFLGEAFLAVRREIVSLSSLERKSIPEAESLSLLLEGVRRSEPHAALDSAFVCIYEIGYYIDYLARSDKQHPPAAPSLLLGICTGSIAAAAVSCAKDVFEISRLGVEAATVAFRLGMHVRRRAENLGYSTPSSWSMILSSNQEELVSEALKEFSKEKNLTYSSRPYISATGPGFTTISGPPSILESVKSCDTFSGKRLYPAPIYGPYHNSSSYSESSLEHGLASILEDVGFLENEMLIPIISCASGSRLDQLSFGNLLKNVLSSALSQQIRMDLVTDALVETVSGTEATLIPVNAQTTVCSLADWLAKRGATTRIGPTLESLTKDRAEPNLAPGDENKIAIIGFSGRFPEADNLDEFWDLLIRGLDVHKPVPEERFARDHYDPTGQRKNTSQVQYGCWLKSAGYFDTQFFHMSPKEAMQTDPAQRLALLTAYEALEMAGVVPDRTPSTQRNRVGVYYGTTSNDWGEVNSSQDVDTYYIPGANRAFIPGRVNYFFKFTGPSIAVDTACSSSLAAINLAITSLKNRDCDTAIAGGTNVMTNPDNFAGLDRGHFLSRTGNCKAFDDGADGYCRADGIGTLILKRLPDAIADSDPIFGVILGAHTNHSAESVSITRPLADAQEYLFKKLLNETGIHPHDVSYVEMHGTGTQAGDAVEMRSVLNSFAFDHSRPRDKSLYLGSVKANVGHAESASGVLAIIKVLLMMQKNTIPPHCGIKTKINQGFPKDLDHRGVRIALKDSVDWSRPEGGKRRVLVNNFSAAGGNTSLLLEDGPAVHPARQHQDGDARTEHVVAVSARSTKALEENLKALEAYIANSWAPEGELLSQLSYTTTARRVHHSRRVAFVTNGLDDLRKSLLKAATDAGQVKGIPAVSPKVGFLFTGQGAQETAMAIGYYKSFSSFRSDIHQLDSIATLQGLPSVLPLIHGTTPVEDLSAVVVQLGTCIIQISLARFWISLGITPQYVIGHSLGEYAALQIAGVLSVNDAIFLCGHRAALLDKKCTAYTHGMVAVKAAADDLRQHISSDLKVEIACVNGAEDTVLSGPNADIESLCGKLTQAGYKLHKLEIPFAFHSSQVDPILDDLEELASQVGFHEPKLPIVSPLLRTLLTGDTLGPQYIRRHCRETVDFLGAIKMAESQGIMDRSGMCIEIGAHPILTRMVKSIIGQDFRCLASLRRKEDHFKTLADSLCALHLAGFSVNWDEYHRDFASSRNVLQLPKYSWQLANYWMQYKYSWCLTKGDAPVENGPVGAVVQARALRLSDSVHNVIEQVHGDKRSSITVESDMHDPSLLAIAQNHRVNGLTMAPSTLFADIAFTLAKHLIQNHGLDTHTNLPSINNMAVEKALIVGETGPQLFRASLDMDWTTMRGSVRIFSVGANGKQTTLHAVCDVAVENPSSHRESWQSNAYLIQRGIKQLVQGASDGSAHMMRRGLLYKIFSNSVQYGSAFQGIEQVWFDSEGLEGTGKVFMPSGKDTFALNPYCCDSLGHITGFIMNCSDSLDLDDHVYINHGWRTLRLVEPYQCDVQYQTYVKMQAVGSDDSTYSGDVHVLRDGKIIGICGGVTFKKVARKVLEMLLPKPSGAKAKHGVVKHVAPEPVKHVVLTPPSTTSHSVGTTSPPEPTESPVGSASGLIQKALEIIADEIGVDISQLTDTTLLADLGVDSLMSLTILGNFREELDLDIPAAQFYEFSTVQDLKSFLGANDQDFSSSNSEAESSASSAASTSPSDHGDDVVEEVKPVVAEIPRSTSTILQGTKHCSQTLFLFPDGAGSATSYVTLPSISSDMRVIGLNSPYLTKPHEFNCALQDITGSYLNEVRRRQPQGPYHLAGWSAGGVSAFDAARQLVSEGEVVESLILIDSPNPVGLGKLPKRMYDFLEKSGIFGAFEMGEEAQAPPDWLFQHFCVFIEALDRYVPEPFEHGMAPKTTIIWAADGVCKNPDDPRPEAQPDDPRGMNWLLNNREDFGPNGWDEFIGAGNISTMAIENANHFTMMREPIASALCAKIRETMGVN</sequence>
<evidence type="ECO:0000250" key="1">
    <source>
        <dbReference type="UniProtKB" id="Q03149"/>
    </source>
</evidence>
<evidence type="ECO:0000250" key="2">
    <source>
        <dbReference type="UniProtKB" id="Q5B0D0"/>
    </source>
</evidence>
<evidence type="ECO:0000255" key="3"/>
<evidence type="ECO:0000255" key="4">
    <source>
        <dbReference type="PROSITE-ProRule" id="PRU00258"/>
    </source>
</evidence>
<evidence type="ECO:0000255" key="5">
    <source>
        <dbReference type="PROSITE-ProRule" id="PRU01348"/>
    </source>
</evidence>
<evidence type="ECO:0000255" key="6">
    <source>
        <dbReference type="PROSITE-ProRule" id="PRU01363"/>
    </source>
</evidence>
<evidence type="ECO:0000255" key="7">
    <source>
        <dbReference type="PROSITE-ProRule" id="PRU10022"/>
    </source>
</evidence>
<evidence type="ECO:0000256" key="8">
    <source>
        <dbReference type="SAM" id="MobiDB-lite"/>
    </source>
</evidence>
<evidence type="ECO:0000269" key="9">
    <source>
    </source>
</evidence>
<evidence type="ECO:0000269" key="10">
    <source>
    </source>
</evidence>
<evidence type="ECO:0000269" key="11">
    <source>
    </source>
</evidence>
<evidence type="ECO:0000269" key="12">
    <source>
    </source>
</evidence>
<evidence type="ECO:0000269" key="13">
    <source>
    </source>
</evidence>
<evidence type="ECO:0000269" key="14">
    <source>
    </source>
</evidence>
<evidence type="ECO:0000303" key="15">
    <source>
    </source>
</evidence>
<evidence type="ECO:0000303" key="16">
    <source>
    </source>
</evidence>
<evidence type="ECO:0000305" key="17"/>
<feature type="chain" id="PRO_0000436338" description="Bikaverin polyketide synthase bik1">
    <location>
        <begin position="1"/>
        <end position="2036"/>
    </location>
</feature>
<feature type="domain" description="Ketosynthase family 3 (KS3)" evidence="5">
    <location>
        <begin position="370"/>
        <end position="801"/>
    </location>
</feature>
<feature type="domain" description="PKS/mFAS DH" evidence="6">
    <location>
        <begin position="1293"/>
        <end position="1600"/>
    </location>
</feature>
<feature type="domain" description="Carrier" evidence="4">
    <location>
        <begin position="1653"/>
        <end position="1730"/>
    </location>
</feature>
<feature type="region of interest" description="N-terminal acylcarrier protein transacylase domain (SAT)" evidence="3">
    <location>
        <begin position="8"/>
        <end position="242"/>
    </location>
</feature>
<feature type="region of interest" description="Acyl/malonyl transferases" evidence="3">
    <location>
        <begin position="908"/>
        <end position="1209"/>
    </location>
</feature>
<feature type="region of interest" description="N-terminal hotdog fold" evidence="6">
    <location>
        <begin position="1293"/>
        <end position="1425"/>
    </location>
</feature>
<feature type="region of interest" description="Product template (PT) domain" evidence="3">
    <location>
        <begin position="1295"/>
        <end position="1599"/>
    </location>
</feature>
<feature type="region of interest" description="C-terminal hotdog fold" evidence="6">
    <location>
        <begin position="1452"/>
        <end position="1600"/>
    </location>
</feature>
<feature type="region of interest" description="Disordered" evidence="8">
    <location>
        <begin position="1628"/>
        <end position="1654"/>
    </location>
</feature>
<feature type="region of interest" description="Disordered" evidence="8">
    <location>
        <begin position="1733"/>
        <end position="1758"/>
    </location>
</feature>
<feature type="compositionally biased region" description="Low complexity" evidence="8">
    <location>
        <begin position="1638"/>
        <end position="1654"/>
    </location>
</feature>
<feature type="compositionally biased region" description="Low complexity" evidence="8">
    <location>
        <begin position="1734"/>
        <end position="1753"/>
    </location>
</feature>
<feature type="active site" description="For beta-ketoacyl synthase activity" evidence="5">
    <location>
        <position position="541"/>
    </location>
</feature>
<feature type="active site" description="For beta-ketoacyl synthase activity" evidence="5">
    <location>
        <position position="676"/>
    </location>
</feature>
<feature type="active site" description="For beta-ketoacyl synthase activity" evidence="5">
    <location>
        <position position="718"/>
    </location>
</feature>
<feature type="active site" description="For acyl/malonyl transferase activity" evidence="7">
    <location>
        <position position="997"/>
    </location>
</feature>
<feature type="active site" description="Proton acceptor; for dehydratase activity" evidence="6">
    <location>
        <position position="1325"/>
    </location>
</feature>
<feature type="active site" description="Proton donor; for dehydratase activity" evidence="6">
    <location>
        <position position="1511"/>
    </location>
</feature>
<feature type="active site" description="For thioesterase activity" evidence="1">
    <location>
        <position position="1857"/>
    </location>
</feature>
<feature type="modified residue" description="O-(pantetheine 4'-phosphoryl)serine" evidence="4">
    <location>
        <position position="1690"/>
    </location>
</feature>
<gene>
    <name evidence="16" type="primary">bik1</name>
    <name evidence="15" type="synonym">pks4</name>
    <name type="ORF">FFUJ_06742</name>
</gene>
<protein>
    <recommendedName>
        <fullName evidence="17">Bikaverin polyketide synthase bik1</fullName>
        <ecNumber evidence="10 11">2.3.1.-</ecNumber>
    </recommendedName>
    <alternativeName>
        <fullName evidence="16">Bikaverin biosynthesis protein 1</fullName>
    </alternativeName>
</protein>